<evidence type="ECO:0000250" key="1">
    <source>
        <dbReference type="UniProtKB" id="Q14330"/>
    </source>
</evidence>
<evidence type="ECO:0000255" key="2"/>
<evidence type="ECO:0000255" key="3">
    <source>
        <dbReference type="PROSITE-ProRule" id="PRU00521"/>
    </source>
</evidence>
<evidence type="ECO:0000269" key="4">
    <source>
    </source>
</evidence>
<evidence type="ECO:0000269" key="5">
    <source>
    </source>
</evidence>
<evidence type="ECO:0000269" key="6">
    <source>
    </source>
</evidence>
<evidence type="ECO:0000269" key="7">
    <source>
    </source>
</evidence>
<evidence type="ECO:0000269" key="8">
    <source>
    </source>
</evidence>
<evidence type="ECO:0000269" key="9">
    <source>
    </source>
</evidence>
<evidence type="ECO:0000269" key="10">
    <source>
    </source>
</evidence>
<evidence type="ECO:0000305" key="11"/>
<evidence type="ECO:0000312" key="12">
    <source>
        <dbReference type="EMBL" id="AAH34872.1"/>
    </source>
</evidence>
<evidence type="ECO:0000312" key="13">
    <source>
        <dbReference type="EMBL" id="BAE42987.1"/>
    </source>
</evidence>
<evidence type="ECO:0000312" key="14">
    <source>
        <dbReference type="MGI" id="MGI:107859"/>
    </source>
</evidence>
<evidence type="ECO:0007744" key="15">
    <source>
    </source>
</evidence>
<reference evidence="13" key="1">
    <citation type="journal article" date="2005" name="Science">
        <title>The transcriptional landscape of the mammalian genome.</title>
        <authorList>
            <person name="Carninci P."/>
            <person name="Kasukawa T."/>
            <person name="Katayama S."/>
            <person name="Gough J."/>
            <person name="Frith M.C."/>
            <person name="Maeda N."/>
            <person name="Oyama R."/>
            <person name="Ravasi T."/>
            <person name="Lenhard B."/>
            <person name="Wells C."/>
            <person name="Kodzius R."/>
            <person name="Shimokawa K."/>
            <person name="Bajic V.B."/>
            <person name="Brenner S.E."/>
            <person name="Batalov S."/>
            <person name="Forrest A.R."/>
            <person name="Zavolan M."/>
            <person name="Davis M.J."/>
            <person name="Wilming L.G."/>
            <person name="Aidinis V."/>
            <person name="Allen J.E."/>
            <person name="Ambesi-Impiombato A."/>
            <person name="Apweiler R."/>
            <person name="Aturaliya R.N."/>
            <person name="Bailey T.L."/>
            <person name="Bansal M."/>
            <person name="Baxter L."/>
            <person name="Beisel K.W."/>
            <person name="Bersano T."/>
            <person name="Bono H."/>
            <person name="Chalk A.M."/>
            <person name="Chiu K.P."/>
            <person name="Choudhary V."/>
            <person name="Christoffels A."/>
            <person name="Clutterbuck D.R."/>
            <person name="Crowe M.L."/>
            <person name="Dalla E."/>
            <person name="Dalrymple B.P."/>
            <person name="de Bono B."/>
            <person name="Della Gatta G."/>
            <person name="di Bernardo D."/>
            <person name="Down T."/>
            <person name="Engstrom P."/>
            <person name="Fagiolini M."/>
            <person name="Faulkner G."/>
            <person name="Fletcher C.F."/>
            <person name="Fukushima T."/>
            <person name="Furuno M."/>
            <person name="Futaki S."/>
            <person name="Gariboldi M."/>
            <person name="Georgii-Hemming P."/>
            <person name="Gingeras T.R."/>
            <person name="Gojobori T."/>
            <person name="Green R.E."/>
            <person name="Gustincich S."/>
            <person name="Harbers M."/>
            <person name="Hayashi Y."/>
            <person name="Hensch T.K."/>
            <person name="Hirokawa N."/>
            <person name="Hill D."/>
            <person name="Huminiecki L."/>
            <person name="Iacono M."/>
            <person name="Ikeo K."/>
            <person name="Iwama A."/>
            <person name="Ishikawa T."/>
            <person name="Jakt M."/>
            <person name="Kanapin A."/>
            <person name="Katoh M."/>
            <person name="Kawasawa Y."/>
            <person name="Kelso J."/>
            <person name="Kitamura H."/>
            <person name="Kitano H."/>
            <person name="Kollias G."/>
            <person name="Krishnan S.P."/>
            <person name="Kruger A."/>
            <person name="Kummerfeld S.K."/>
            <person name="Kurochkin I.V."/>
            <person name="Lareau L.F."/>
            <person name="Lazarevic D."/>
            <person name="Lipovich L."/>
            <person name="Liu J."/>
            <person name="Liuni S."/>
            <person name="McWilliam S."/>
            <person name="Madan Babu M."/>
            <person name="Madera M."/>
            <person name="Marchionni L."/>
            <person name="Matsuda H."/>
            <person name="Matsuzawa S."/>
            <person name="Miki H."/>
            <person name="Mignone F."/>
            <person name="Miyake S."/>
            <person name="Morris K."/>
            <person name="Mottagui-Tabar S."/>
            <person name="Mulder N."/>
            <person name="Nakano N."/>
            <person name="Nakauchi H."/>
            <person name="Ng P."/>
            <person name="Nilsson R."/>
            <person name="Nishiguchi S."/>
            <person name="Nishikawa S."/>
            <person name="Nori F."/>
            <person name="Ohara O."/>
            <person name="Okazaki Y."/>
            <person name="Orlando V."/>
            <person name="Pang K.C."/>
            <person name="Pavan W.J."/>
            <person name="Pavesi G."/>
            <person name="Pesole G."/>
            <person name="Petrovsky N."/>
            <person name="Piazza S."/>
            <person name="Reed J."/>
            <person name="Reid J.F."/>
            <person name="Ring B.Z."/>
            <person name="Ringwald M."/>
            <person name="Rost B."/>
            <person name="Ruan Y."/>
            <person name="Salzberg S.L."/>
            <person name="Sandelin A."/>
            <person name="Schneider C."/>
            <person name="Schoenbach C."/>
            <person name="Sekiguchi K."/>
            <person name="Semple C.A."/>
            <person name="Seno S."/>
            <person name="Sessa L."/>
            <person name="Sheng Y."/>
            <person name="Shibata Y."/>
            <person name="Shimada H."/>
            <person name="Shimada K."/>
            <person name="Silva D."/>
            <person name="Sinclair B."/>
            <person name="Sperling S."/>
            <person name="Stupka E."/>
            <person name="Sugiura K."/>
            <person name="Sultana R."/>
            <person name="Takenaka Y."/>
            <person name="Taki K."/>
            <person name="Tammoja K."/>
            <person name="Tan S.L."/>
            <person name="Tang S."/>
            <person name="Taylor M.S."/>
            <person name="Tegner J."/>
            <person name="Teichmann S.A."/>
            <person name="Ueda H.R."/>
            <person name="van Nimwegen E."/>
            <person name="Verardo R."/>
            <person name="Wei C.L."/>
            <person name="Yagi K."/>
            <person name="Yamanishi H."/>
            <person name="Zabarovsky E."/>
            <person name="Zhu S."/>
            <person name="Zimmer A."/>
            <person name="Hide W."/>
            <person name="Bult C."/>
            <person name="Grimmond S.M."/>
            <person name="Teasdale R.D."/>
            <person name="Liu E.T."/>
            <person name="Brusic V."/>
            <person name="Quackenbush J."/>
            <person name="Wahlestedt C."/>
            <person name="Mattick J.S."/>
            <person name="Hume D.A."/>
            <person name="Kai C."/>
            <person name="Sasaki D."/>
            <person name="Tomaru Y."/>
            <person name="Fukuda S."/>
            <person name="Kanamori-Katayama M."/>
            <person name="Suzuki M."/>
            <person name="Aoki J."/>
            <person name="Arakawa T."/>
            <person name="Iida J."/>
            <person name="Imamura K."/>
            <person name="Itoh M."/>
            <person name="Kato T."/>
            <person name="Kawaji H."/>
            <person name="Kawagashira N."/>
            <person name="Kawashima T."/>
            <person name="Kojima M."/>
            <person name="Kondo S."/>
            <person name="Konno H."/>
            <person name="Nakano K."/>
            <person name="Ninomiya N."/>
            <person name="Nishio T."/>
            <person name="Okada M."/>
            <person name="Plessy C."/>
            <person name="Shibata K."/>
            <person name="Shiraki T."/>
            <person name="Suzuki S."/>
            <person name="Tagami M."/>
            <person name="Waki K."/>
            <person name="Watahiki A."/>
            <person name="Okamura-Oho Y."/>
            <person name="Suzuki H."/>
            <person name="Kawai J."/>
            <person name="Hayashizaki Y."/>
        </authorList>
    </citation>
    <scope>NUCLEOTIDE SEQUENCE [LARGE SCALE MRNA]</scope>
    <source>
        <strain evidence="13">NOD</strain>
        <tissue evidence="13">Spleen</tissue>
    </source>
</reference>
<reference evidence="12" key="2">
    <citation type="journal article" date="2004" name="Genome Res.">
        <title>The status, quality, and expansion of the NIH full-length cDNA project: the Mammalian Gene Collection (MGC).</title>
        <authorList>
            <consortium name="The MGC Project Team"/>
        </authorList>
    </citation>
    <scope>NUCLEOTIDE SEQUENCE [LARGE SCALE MRNA]</scope>
    <source>
        <strain evidence="12">C57BL/6J</strain>
        <tissue evidence="12">Mammary gland</tissue>
    </source>
</reference>
<reference key="3">
    <citation type="journal article" date="2010" name="Cell">
        <title>A tissue-specific atlas of mouse protein phosphorylation and expression.</title>
        <authorList>
            <person name="Huttlin E.L."/>
            <person name="Jedrychowski M.P."/>
            <person name="Elias J.E."/>
            <person name="Goswami T."/>
            <person name="Rad R."/>
            <person name="Beausoleil S.A."/>
            <person name="Villen J."/>
            <person name="Haas W."/>
            <person name="Sowa M.E."/>
            <person name="Gygi S.P."/>
        </authorList>
    </citation>
    <scope>PHOSPHORYLATION [LARGE SCALE ANALYSIS] AT SER-322</scope>
    <scope>IDENTIFICATION BY MASS SPECTROMETRY [LARGE SCALE ANALYSIS]</scope>
    <source>
        <tissue>Spleen</tissue>
    </source>
</reference>
<reference key="4">
    <citation type="journal article" date="2012" name="Biochem. Biophys. Res. Commun.">
        <title>N-arachidonoyl glycine induces macrophage apoptosis via GPR18.</title>
        <authorList>
            <person name="Takenouchi R."/>
            <person name="Inoue K."/>
            <person name="Kambe Y."/>
            <person name="Miyata A."/>
        </authorList>
    </citation>
    <scope>FUNCTION</scope>
</reference>
<reference key="5">
    <citation type="journal article" date="2013" name="Br. J. Pharmacol.">
        <title>A GPR18-based signalling system regulates IOP in murine eye.</title>
        <authorList>
            <person name="Caldwell M.D."/>
            <person name="Hu S.S."/>
            <person name="Viswanathan S."/>
            <person name="Bradshaw H."/>
            <person name="Kelly M.E."/>
            <person name="Straiker A."/>
        </authorList>
    </citation>
    <scope>FUNCTION</scope>
    <scope>TISSUE SPECIFICITY</scope>
</reference>
<reference key="6">
    <citation type="journal article" date="2013" name="Mol. Pharmacol.">
        <title>N-Arachidonyl glycine does not activate G protein-coupled receptor 18 signaling via canonical pathways.</title>
        <authorList>
            <person name="Lu V.B."/>
            <person name="Puhl H.L. III"/>
            <person name="Ikeda S.R."/>
        </authorList>
    </citation>
    <scope>FUNCTION</scope>
    <scope>SUBCELLULAR LOCATION</scope>
</reference>
<reference key="7">
    <citation type="journal article" date="2014" name="J. Exp. Med.">
        <title>GPR18 is required for a normal CD8alphaalpha intestinal intraepithelial lymphocyte compartment.</title>
        <authorList>
            <person name="Wang X."/>
            <person name="Sumida H."/>
            <person name="Cyster J.G."/>
        </authorList>
    </citation>
    <scope>FUNCTION</scope>
    <scope>TISSUE SPECIFICITY</scope>
    <scope>DISRUPTION PHENOTYPE</scope>
</reference>
<reference key="8">
    <citation type="journal article" date="2015" name="PLoS ONE">
        <title>GPR18 controls reconstitution of mouse small intestine intraepithelial lymphocytes following bone marrow transplantation.</title>
        <authorList>
            <person name="Becker A.M."/>
            <person name="Callahan D.J."/>
            <person name="Richner J.M."/>
            <person name="Choi J."/>
            <person name="DiPersio J.F."/>
            <person name="Diamond M.S."/>
            <person name="Bhattacharya D."/>
        </authorList>
    </citation>
    <scope>FUNCTION</scope>
    <scope>TISSUE SPECIFICITY</scope>
    <scope>DISRUPTION PHENOTYPE</scope>
</reference>
<reference key="9">
    <citation type="journal article" date="2015" name="J. Exp. Med.">
        <title>Identification of resolvin D2 receptor mediating resolution of infections and organ protection.</title>
        <authorList>
            <person name="Chiang N."/>
            <person name="Dalli J."/>
            <person name="Colas R.A."/>
            <person name="Serhan C.N."/>
        </authorList>
    </citation>
    <scope>FUNCTION</scope>
    <scope>DISRUPTION PHENOTYPE</scope>
</reference>
<reference key="10">
    <citation type="journal article" date="2016" name="Invest. Ophthalmol. Vis. Sci.">
        <title>Evidence for a GPR18 role in diurnal regulation of intraocular pressure.</title>
        <authorList>
            <person name="Miller S."/>
            <person name="Leishman E."/>
            <person name="Oehler O."/>
            <person name="Daily L."/>
            <person name="Murataeva N."/>
            <person name="Wager-Miller J."/>
            <person name="Bradshaw H."/>
            <person name="Straiker A."/>
        </authorList>
    </citation>
    <scope>FUNCTION</scope>
</reference>
<proteinExistence type="evidence at protein level"/>
<comment type="function">
    <text evidence="1 4 6 7 8 9 10">G protein-coupled receptor (GPCR) that plays a role in diverse physiological processes particularly within the immune and nervous systems. Becomes active when triggered by various endogenous ligands including endocannabinoid N-arachidonyl glycine (NAGly), delta-9-tetrahydrocannabinol or resolvin D2/RvD2 derived from the omega-3 fatty acid docosahexaenoic acid (DHA). Upon RvD2 binding, facilitates the resolution of inflammation, aiding in tissue repair and homeostasis (PubMed:26195725). Mechanistically, RvD2 ligation initiates Galphas protein coupling, activation of cAMP-PKA signaling pathway and phosphorylation of STAT3, leading to RvD2-stimulated macrophage phagocytosis. Mediates NAGly-induced process of reorganization of actin filaments and induction of acrosomal exocytosis (By similarity). Activation by N-arachidonoyl glycine (NAGly) can also induce apoptosis in macrophages (PubMed:22266325). Plays a role in homeostasis of CD8+ subsets of intraepithelial lymphocytes (IELs) (CD8alphaalpha and CD8alphabeta IELs) in small intestine by supporting preferential migration of CD8alphaalpha T-cells to intraepithelial compartment over lamina propria compartment, and by mediating their reconstitution into small intestine after bone marrow transplant (PubMed:25348153, PubMed:26197390). Also participates in hypotensive responses, mediating reduction in intraocular and blood pressure (PubMed:27893106).</text>
</comment>
<comment type="subcellular location">
    <subcellularLocation>
        <location evidence="5">Cell membrane</location>
        <topology evidence="2">Multi-pass membrane protein</topology>
    </subcellularLocation>
    <subcellularLocation>
        <location evidence="1">Cytoplasmic vesicle membrane</location>
    </subcellularLocation>
</comment>
<comment type="tissue specificity">
    <text evidence="6 7 9">Expressed in the eye including cornea, retina, iris and ciliary epithelium (at protein level) (PubMed:23461720). Expressed in spleen, liver and lymphocytes with highest expression levels in intestinal intraepithelial lymphocytes (PubMed:25348153, PubMed:26197390).</text>
</comment>
<comment type="disruption phenotype">
    <text evidence="7 8 9">No visible phenotype (PubMed:26197390). However, reduced number of CD8alphaalpha gammadeltaT IELs has been reported (PubMed:25348153). In addition, GPR18-deficient mice display impaired resolution of infections and diminished responses with RvD2 (PubMed:26195725).</text>
</comment>
<comment type="similarity">
    <text evidence="3">Belongs to the G-protein coupled receptor 1 family.</text>
</comment>
<name>GPR18_MOUSE</name>
<sequence>MATLSNHNQLDLSNGSHPEEYKIAALVFYSCIFLIGLFVNVTALWVFSCTTKKRTTVTIYMMNVALLDLVFILSLPFRMFYYAKGEWPFGEYFCHILGALVVFYPSLALWLLAFISADRYMAIVQPKYAKELKNTGKAVLACGGVWVMTLTTTVPLLLLYEDPDKASSPATCLKISDITHLKAVNVLNFTRLIFFFLIPLFIMIGCYVVIIHSLLRGQTSKLKPKVKEKSIRIIMTLLLQVLVCFVPFHICFAVLMLQGQENSYSPWGAFTTFLMNLSTCLDVVLYYIVSKQFQARVISVMLYRNYLRSVRRKSVRSGSLRSLSNMNSEML</sequence>
<organism>
    <name type="scientific">Mus musculus</name>
    <name type="common">Mouse</name>
    <dbReference type="NCBI Taxonomy" id="10090"/>
    <lineage>
        <taxon>Eukaryota</taxon>
        <taxon>Metazoa</taxon>
        <taxon>Chordata</taxon>
        <taxon>Craniata</taxon>
        <taxon>Vertebrata</taxon>
        <taxon>Euteleostomi</taxon>
        <taxon>Mammalia</taxon>
        <taxon>Eutheria</taxon>
        <taxon>Euarchontoglires</taxon>
        <taxon>Glires</taxon>
        <taxon>Rodentia</taxon>
        <taxon>Myomorpha</taxon>
        <taxon>Muroidea</taxon>
        <taxon>Muridae</taxon>
        <taxon>Murinae</taxon>
        <taxon>Mus</taxon>
        <taxon>Mus</taxon>
    </lineage>
</organism>
<accession>Q8K1Z6</accession>
<accession>Q3T9N3</accession>
<gene>
    <name evidence="12 14" type="primary">Gpr18</name>
</gene>
<protein>
    <recommendedName>
        <fullName>N-arachidonyl glycine receptor</fullName>
        <shortName>NAGly receptor</shortName>
    </recommendedName>
    <alternativeName>
        <fullName>G-protein coupled receptor 18</fullName>
    </alternativeName>
</protein>
<feature type="chain" id="PRO_0000278174" description="N-arachidonyl glycine receptor">
    <location>
        <begin position="1"/>
        <end position="331"/>
    </location>
</feature>
<feature type="topological domain" description="Extracellular" evidence="2">
    <location>
        <begin position="1"/>
        <end position="26"/>
    </location>
</feature>
<feature type="transmembrane region" description="Helical; Name=1" evidence="2">
    <location>
        <begin position="27"/>
        <end position="47"/>
    </location>
</feature>
<feature type="topological domain" description="Cytoplasmic" evidence="2">
    <location>
        <begin position="48"/>
        <end position="56"/>
    </location>
</feature>
<feature type="transmembrane region" description="Helical; Name=2" evidence="2">
    <location>
        <begin position="57"/>
        <end position="77"/>
    </location>
</feature>
<feature type="topological domain" description="Extracellular" evidence="2">
    <location>
        <begin position="78"/>
        <end position="95"/>
    </location>
</feature>
<feature type="transmembrane region" description="Helical; Name=3" evidence="2">
    <location>
        <begin position="96"/>
        <end position="116"/>
    </location>
</feature>
<feature type="topological domain" description="Cytoplasmic" evidence="2">
    <location>
        <begin position="117"/>
        <end position="138"/>
    </location>
</feature>
<feature type="transmembrane region" description="Helical; Name=4" evidence="2">
    <location>
        <begin position="139"/>
        <end position="159"/>
    </location>
</feature>
<feature type="topological domain" description="Extracellular" evidence="2">
    <location>
        <begin position="160"/>
        <end position="191"/>
    </location>
</feature>
<feature type="transmembrane region" description="Helical; Name=5" evidence="2">
    <location>
        <begin position="192"/>
        <end position="212"/>
    </location>
</feature>
<feature type="topological domain" description="Cytoplasmic" evidence="2">
    <location>
        <begin position="213"/>
        <end position="236"/>
    </location>
</feature>
<feature type="transmembrane region" description="Helical; Name=6" evidence="2">
    <location>
        <begin position="237"/>
        <end position="257"/>
    </location>
</feature>
<feature type="topological domain" description="Extracellular" evidence="2">
    <location>
        <begin position="258"/>
        <end position="268"/>
    </location>
</feature>
<feature type="transmembrane region" description="Helical; Name=7" evidence="2">
    <location>
        <begin position="269"/>
        <end position="289"/>
    </location>
</feature>
<feature type="topological domain" description="Cytoplasmic" evidence="2">
    <location>
        <begin position="290"/>
        <end position="331"/>
    </location>
</feature>
<feature type="modified residue" description="Phosphoserine" evidence="15">
    <location>
        <position position="322"/>
    </location>
</feature>
<feature type="glycosylation site" description="N-linked (GlcNAc...) asparagine" evidence="2">
    <location>
        <position position="14"/>
    </location>
</feature>
<feature type="glycosylation site" description="N-linked (GlcNAc...) asparagine" evidence="2">
    <location>
        <position position="188"/>
    </location>
</feature>
<feature type="disulfide bond" evidence="3">
    <location>
        <begin position="94"/>
        <end position="172"/>
    </location>
</feature>
<feature type="sequence conflict" description="In Ref. 1; BAE42987." evidence="11" ref="1">
    <original>I</original>
    <variation>V</variation>
    <location>
        <position position="23"/>
    </location>
</feature>
<dbReference type="EMBL" id="AK156039">
    <property type="protein sequence ID" value="BAE33557.1"/>
    <property type="molecule type" value="mRNA"/>
</dbReference>
<dbReference type="EMBL" id="AK156868">
    <property type="protein sequence ID" value="BAE33880.1"/>
    <property type="molecule type" value="mRNA"/>
</dbReference>
<dbReference type="EMBL" id="AK157029">
    <property type="protein sequence ID" value="BAE33938.1"/>
    <property type="molecule type" value="mRNA"/>
</dbReference>
<dbReference type="EMBL" id="AK172401">
    <property type="protein sequence ID" value="BAE42987.1"/>
    <property type="molecule type" value="mRNA"/>
</dbReference>
<dbReference type="EMBL" id="BC034872">
    <property type="protein sequence ID" value="AAH34872.1"/>
    <property type="molecule type" value="mRNA"/>
</dbReference>
<dbReference type="CCDS" id="CCDS27342.1"/>
<dbReference type="RefSeq" id="NP_877958.1">
    <property type="nucleotide sequence ID" value="NM_182806.2"/>
</dbReference>
<dbReference type="SMR" id="Q8K1Z6"/>
<dbReference type="FunCoup" id="Q8K1Z6">
    <property type="interactions" value="220"/>
</dbReference>
<dbReference type="IntAct" id="Q8K1Z6">
    <property type="interactions" value="1"/>
</dbReference>
<dbReference type="STRING" id="10090.ENSMUSP00000061410"/>
<dbReference type="GlyCosmos" id="Q8K1Z6">
    <property type="glycosylation" value="2 sites, No reported glycans"/>
</dbReference>
<dbReference type="GlyGen" id="Q8K1Z6">
    <property type="glycosylation" value="2 sites"/>
</dbReference>
<dbReference type="iPTMnet" id="Q8K1Z6"/>
<dbReference type="PhosphoSitePlus" id="Q8K1Z6"/>
<dbReference type="PaxDb" id="10090-ENSMUSP00000061410"/>
<dbReference type="ProteomicsDB" id="271448"/>
<dbReference type="Antibodypedia" id="2954">
    <property type="antibodies" value="349 antibodies from 30 providers"/>
</dbReference>
<dbReference type="DNASU" id="110168"/>
<dbReference type="Ensembl" id="ENSMUST00000055475.9">
    <property type="protein sequence ID" value="ENSMUSP00000061410.8"/>
    <property type="gene ID" value="ENSMUSG00000050350.9"/>
</dbReference>
<dbReference type="GeneID" id="110168"/>
<dbReference type="KEGG" id="mmu:110168"/>
<dbReference type="UCSC" id="uc007vap.1">
    <property type="organism name" value="mouse"/>
</dbReference>
<dbReference type="AGR" id="MGI:107859"/>
<dbReference type="CTD" id="2841"/>
<dbReference type="MGI" id="MGI:107859">
    <property type="gene designation" value="Gpr18"/>
</dbReference>
<dbReference type="VEuPathDB" id="HostDB:ENSMUSG00000050350"/>
<dbReference type="eggNOG" id="ENOG502QT1V">
    <property type="taxonomic scope" value="Eukaryota"/>
</dbReference>
<dbReference type="GeneTree" id="ENSGT01130000278275"/>
<dbReference type="HOGENOM" id="CLU_009579_8_2_1"/>
<dbReference type="InParanoid" id="Q8K1Z6"/>
<dbReference type="OMA" id="TITIYMM"/>
<dbReference type="OrthoDB" id="5952950at2759"/>
<dbReference type="PhylomeDB" id="Q8K1Z6"/>
<dbReference type="TreeFam" id="TF330775"/>
<dbReference type="Reactome" id="R-MMU-373076">
    <property type="pathway name" value="Class A/1 (Rhodopsin-like receptors)"/>
</dbReference>
<dbReference type="Reactome" id="R-MMU-418594">
    <property type="pathway name" value="G alpha (i) signalling events"/>
</dbReference>
<dbReference type="BioGRID-ORCS" id="110168">
    <property type="hits" value="1 hit in 81 CRISPR screens"/>
</dbReference>
<dbReference type="PRO" id="PR:Q8K1Z6"/>
<dbReference type="Proteomes" id="UP000000589">
    <property type="component" value="Chromosome 14"/>
</dbReference>
<dbReference type="RNAct" id="Q8K1Z6">
    <property type="molecule type" value="protein"/>
</dbReference>
<dbReference type="Bgee" id="ENSMUSG00000050350">
    <property type="expression patterns" value="Expressed in peripheral lymph node and 55 other cell types or tissues"/>
</dbReference>
<dbReference type="GO" id="GO:0030659">
    <property type="term" value="C:cytoplasmic vesicle membrane"/>
    <property type="evidence" value="ECO:0007669"/>
    <property type="project" value="UniProtKB-SubCell"/>
</dbReference>
<dbReference type="GO" id="GO:0005886">
    <property type="term" value="C:plasma membrane"/>
    <property type="evidence" value="ECO:0007669"/>
    <property type="project" value="UniProtKB-SubCell"/>
</dbReference>
<dbReference type="GO" id="GO:0004930">
    <property type="term" value="F:G protein-coupled receptor activity"/>
    <property type="evidence" value="ECO:0007669"/>
    <property type="project" value="UniProtKB-KW"/>
</dbReference>
<dbReference type="GO" id="GO:0002300">
    <property type="term" value="P:CD8-positive, alpha-beta intraepithelial T cell differentiation"/>
    <property type="evidence" value="ECO:0000314"/>
    <property type="project" value="MGI"/>
</dbReference>
<dbReference type="GO" id="GO:0002305">
    <property type="term" value="P:CD8-positive, gamma-delta intraepithelial T cell differentiation"/>
    <property type="evidence" value="ECO:0000314"/>
    <property type="project" value="MGI"/>
</dbReference>
<dbReference type="GO" id="GO:0002689">
    <property type="term" value="P:negative regulation of leukocyte chemotaxis"/>
    <property type="evidence" value="ECO:0000315"/>
    <property type="project" value="MGI"/>
</dbReference>
<dbReference type="GO" id="GO:0032720">
    <property type="term" value="P:negative regulation of tumor necrosis factor production"/>
    <property type="evidence" value="ECO:0000315"/>
    <property type="project" value="MGI"/>
</dbReference>
<dbReference type="CDD" id="cd15166">
    <property type="entry name" value="7tmA_NAGly_R_GPR18"/>
    <property type="match status" value="1"/>
</dbReference>
<dbReference type="FunFam" id="1.20.1070.10:FF:000176">
    <property type="entry name" value="N-arachidonyl glycine receptor"/>
    <property type="match status" value="1"/>
</dbReference>
<dbReference type="Gene3D" id="1.20.1070.10">
    <property type="entry name" value="Rhodopsin 7-helix transmembrane proteins"/>
    <property type="match status" value="1"/>
</dbReference>
<dbReference type="InterPro" id="IPR000276">
    <property type="entry name" value="GPCR_Rhodpsn"/>
</dbReference>
<dbReference type="InterPro" id="IPR017452">
    <property type="entry name" value="GPCR_Rhodpsn_7TM"/>
</dbReference>
<dbReference type="InterPro" id="IPR028335">
    <property type="entry name" value="GPR18"/>
</dbReference>
<dbReference type="PANTHER" id="PTHR24232">
    <property type="entry name" value="G-PROTEIN COUPLED RECEPTOR"/>
    <property type="match status" value="1"/>
</dbReference>
<dbReference type="PANTHER" id="PTHR24232:SF1">
    <property type="entry name" value="N-ARACHIDONYL GLYCINE RECEPTOR"/>
    <property type="match status" value="1"/>
</dbReference>
<dbReference type="Pfam" id="PF00001">
    <property type="entry name" value="7tm_1"/>
    <property type="match status" value="1"/>
</dbReference>
<dbReference type="PRINTS" id="PR00237">
    <property type="entry name" value="GPCRRHODOPSN"/>
</dbReference>
<dbReference type="PRINTS" id="PR01157">
    <property type="entry name" value="P2YPURNOCPTR"/>
</dbReference>
<dbReference type="SUPFAM" id="SSF81321">
    <property type="entry name" value="Family A G protein-coupled receptor-like"/>
    <property type="match status" value="1"/>
</dbReference>
<dbReference type="PROSITE" id="PS00237">
    <property type="entry name" value="G_PROTEIN_RECEP_F1_1"/>
    <property type="match status" value="1"/>
</dbReference>
<dbReference type="PROSITE" id="PS50262">
    <property type="entry name" value="G_PROTEIN_RECEP_F1_2"/>
    <property type="match status" value="1"/>
</dbReference>
<keyword id="KW-1003">Cell membrane</keyword>
<keyword id="KW-0968">Cytoplasmic vesicle</keyword>
<keyword id="KW-1015">Disulfide bond</keyword>
<keyword id="KW-0297">G-protein coupled receptor</keyword>
<keyword id="KW-0325">Glycoprotein</keyword>
<keyword id="KW-0472">Membrane</keyword>
<keyword id="KW-0597">Phosphoprotein</keyword>
<keyword id="KW-0675">Receptor</keyword>
<keyword id="KW-1185">Reference proteome</keyword>
<keyword id="KW-0807">Transducer</keyword>
<keyword id="KW-0812">Transmembrane</keyword>
<keyword id="KW-1133">Transmembrane helix</keyword>